<evidence type="ECO:0000255" key="1">
    <source>
        <dbReference type="HAMAP-Rule" id="MF_01369"/>
    </source>
</evidence>
<evidence type="ECO:0000305" key="2"/>
<proteinExistence type="inferred from homology"/>
<sequence>MSKLFDSRLADVIRKPVITEKATNALDLNQYTFEVDHRAAKPQIKAAIEALFSVKVIGVNTMNPPRRTRRVGKFSGKRSQVKKAIVRLAEGDKIQLFPES</sequence>
<dbReference type="EMBL" id="CP000111">
    <property type="protein sequence ID" value="ABB50709.1"/>
    <property type="molecule type" value="Genomic_DNA"/>
</dbReference>
<dbReference type="RefSeq" id="WP_011377190.1">
    <property type="nucleotide sequence ID" value="NC_007577.1"/>
</dbReference>
<dbReference type="SMR" id="Q318I6"/>
<dbReference type="STRING" id="74546.PMT9312_1648"/>
<dbReference type="KEGG" id="pmi:PMT9312_1648"/>
<dbReference type="eggNOG" id="COG0089">
    <property type="taxonomic scope" value="Bacteria"/>
</dbReference>
<dbReference type="HOGENOM" id="CLU_037562_3_2_3"/>
<dbReference type="OrthoDB" id="9793353at2"/>
<dbReference type="Proteomes" id="UP000002715">
    <property type="component" value="Chromosome"/>
</dbReference>
<dbReference type="GO" id="GO:1990904">
    <property type="term" value="C:ribonucleoprotein complex"/>
    <property type="evidence" value="ECO:0007669"/>
    <property type="project" value="UniProtKB-KW"/>
</dbReference>
<dbReference type="GO" id="GO:0005840">
    <property type="term" value="C:ribosome"/>
    <property type="evidence" value="ECO:0007669"/>
    <property type="project" value="UniProtKB-KW"/>
</dbReference>
<dbReference type="GO" id="GO:0019843">
    <property type="term" value="F:rRNA binding"/>
    <property type="evidence" value="ECO:0007669"/>
    <property type="project" value="UniProtKB-UniRule"/>
</dbReference>
<dbReference type="GO" id="GO:0003735">
    <property type="term" value="F:structural constituent of ribosome"/>
    <property type="evidence" value="ECO:0007669"/>
    <property type="project" value="InterPro"/>
</dbReference>
<dbReference type="GO" id="GO:0006412">
    <property type="term" value="P:translation"/>
    <property type="evidence" value="ECO:0007669"/>
    <property type="project" value="UniProtKB-UniRule"/>
</dbReference>
<dbReference type="FunFam" id="3.30.70.330:FF:000001">
    <property type="entry name" value="50S ribosomal protein L23"/>
    <property type="match status" value="1"/>
</dbReference>
<dbReference type="Gene3D" id="3.30.70.330">
    <property type="match status" value="1"/>
</dbReference>
<dbReference type="HAMAP" id="MF_01369_B">
    <property type="entry name" value="Ribosomal_uL23_B"/>
    <property type="match status" value="1"/>
</dbReference>
<dbReference type="InterPro" id="IPR012677">
    <property type="entry name" value="Nucleotide-bd_a/b_plait_sf"/>
</dbReference>
<dbReference type="InterPro" id="IPR013025">
    <property type="entry name" value="Ribosomal_uL23-like"/>
</dbReference>
<dbReference type="InterPro" id="IPR012678">
    <property type="entry name" value="Ribosomal_uL23/eL15/eS24_sf"/>
</dbReference>
<dbReference type="InterPro" id="IPR001014">
    <property type="entry name" value="Ribosomal_uL23_CS"/>
</dbReference>
<dbReference type="NCBIfam" id="NF004363">
    <property type="entry name" value="PRK05738.2-4"/>
    <property type="match status" value="1"/>
</dbReference>
<dbReference type="NCBIfam" id="NF004365">
    <property type="entry name" value="PRK05738.3-1"/>
    <property type="match status" value="1"/>
</dbReference>
<dbReference type="NCBIfam" id="NF004366">
    <property type="entry name" value="PRK05738.3-2"/>
    <property type="match status" value="1"/>
</dbReference>
<dbReference type="NCBIfam" id="NF004368">
    <property type="entry name" value="PRK05738.3-4"/>
    <property type="match status" value="1"/>
</dbReference>
<dbReference type="PANTHER" id="PTHR11620">
    <property type="entry name" value="60S RIBOSOMAL PROTEIN L23A"/>
    <property type="match status" value="1"/>
</dbReference>
<dbReference type="Pfam" id="PF00276">
    <property type="entry name" value="Ribosomal_L23"/>
    <property type="match status" value="1"/>
</dbReference>
<dbReference type="SUPFAM" id="SSF54189">
    <property type="entry name" value="Ribosomal proteins S24e, L23 and L15e"/>
    <property type="match status" value="1"/>
</dbReference>
<dbReference type="PROSITE" id="PS00050">
    <property type="entry name" value="RIBOSOMAL_L23"/>
    <property type="match status" value="1"/>
</dbReference>
<gene>
    <name evidence="1" type="primary">rplW</name>
    <name evidence="1" type="synonym">rpl23</name>
    <name type="ordered locus">PMT9312_1648</name>
</gene>
<reference key="1">
    <citation type="journal article" date="2006" name="Science">
        <title>Genomic islands and the ecology and evolution of Prochlorococcus.</title>
        <authorList>
            <person name="Coleman M.L."/>
            <person name="Sullivan M.B."/>
            <person name="Martiny A.C."/>
            <person name="Steglich C."/>
            <person name="Barry K."/>
            <person name="Delong E.F."/>
            <person name="Chisholm S.W."/>
        </authorList>
    </citation>
    <scope>NUCLEOTIDE SEQUENCE [LARGE SCALE GENOMIC DNA]</scope>
    <source>
        <strain>MIT 9312</strain>
    </source>
</reference>
<protein>
    <recommendedName>
        <fullName evidence="1">Large ribosomal subunit protein uL23</fullName>
    </recommendedName>
    <alternativeName>
        <fullName evidence="2">50S ribosomal protein L23</fullName>
    </alternativeName>
</protein>
<name>RL23_PROM9</name>
<keyword id="KW-0687">Ribonucleoprotein</keyword>
<keyword id="KW-0689">Ribosomal protein</keyword>
<keyword id="KW-0694">RNA-binding</keyword>
<keyword id="KW-0699">rRNA-binding</keyword>
<accession>Q318I6</accession>
<feature type="chain" id="PRO_0000272797" description="Large ribosomal subunit protein uL23">
    <location>
        <begin position="1"/>
        <end position="100"/>
    </location>
</feature>
<comment type="function">
    <text evidence="1">One of the early assembly proteins it binds 23S rRNA. One of the proteins that surrounds the polypeptide exit tunnel on the outside of the ribosome. Forms the main docking site for trigger factor binding to the ribosome.</text>
</comment>
<comment type="subunit">
    <text evidence="1">Part of the 50S ribosomal subunit. Contacts protein L29, and trigger factor when it is bound to the ribosome.</text>
</comment>
<comment type="similarity">
    <text evidence="1">Belongs to the universal ribosomal protein uL23 family.</text>
</comment>
<organism>
    <name type="scientific">Prochlorococcus marinus (strain MIT 9312)</name>
    <dbReference type="NCBI Taxonomy" id="74546"/>
    <lineage>
        <taxon>Bacteria</taxon>
        <taxon>Bacillati</taxon>
        <taxon>Cyanobacteriota</taxon>
        <taxon>Cyanophyceae</taxon>
        <taxon>Synechococcales</taxon>
        <taxon>Prochlorococcaceae</taxon>
        <taxon>Prochlorococcus</taxon>
    </lineage>
</organism>